<proteinExistence type="evidence at transcript level"/>
<accession>Q52MQ7</accession>
<organism>
    <name type="scientific">Canis lupus familiaris</name>
    <name type="common">Dog</name>
    <name type="synonym">Canis familiaris</name>
    <dbReference type="NCBI Taxonomy" id="9615"/>
    <lineage>
        <taxon>Eukaryota</taxon>
        <taxon>Metazoa</taxon>
        <taxon>Chordata</taxon>
        <taxon>Craniata</taxon>
        <taxon>Vertebrata</taxon>
        <taxon>Euteleostomi</taxon>
        <taxon>Mammalia</taxon>
        <taxon>Eutheria</taxon>
        <taxon>Laurasiatheria</taxon>
        <taxon>Carnivora</taxon>
        <taxon>Caniformia</taxon>
        <taxon>Canidae</taxon>
        <taxon>Canis</taxon>
    </lineage>
</organism>
<gene>
    <name evidence="1" type="primary">KRTDAP</name>
    <name evidence="5" type="synonym">KDAP</name>
</gene>
<name>KTDAP_CANLF</name>
<feature type="signal peptide" evidence="3">
    <location>
        <begin position="1"/>
        <end position="22"/>
    </location>
</feature>
<feature type="chain" id="PRO_0000317055" description="Keratinocyte differentiation-associated protein" evidence="3">
    <location>
        <begin position="23"/>
        <end position="99"/>
    </location>
</feature>
<sequence>MKIPVLPAVVLLSLLALHSAQGASLGSSEEETTIGNYAAGPEAFNAQFLNIDKLRSAFKPDEFLNWHALFESIKRKLPFLNWDALPKLKGLRSATPDAQ</sequence>
<reference evidence="6 7" key="1">
    <citation type="journal article" date="2006" name="Vet. J.">
        <title>Identification and cornification-related gene expression of canine keratinocyte differentiation-associated protein, Kdap.</title>
        <authorList>
            <person name="Yagihara H."/>
            <person name="Terada Y."/>
            <person name="Sugimoto S."/>
            <person name="Hidaka F."/>
            <person name="Yamada O."/>
            <person name="Ono K."/>
            <person name="Washizu T."/>
            <person name="Ariizumi K."/>
            <person name="Bonkobara M."/>
        </authorList>
    </citation>
    <scope>NUCLEOTIDE SEQUENCE [MRNA]</scope>
    <scope>TISSUE SPECIFICITY</scope>
</reference>
<keyword id="KW-0221">Differentiation</keyword>
<keyword id="KW-1185">Reference proteome</keyword>
<keyword id="KW-0964">Secreted</keyword>
<keyword id="KW-0732">Signal</keyword>
<dbReference type="EMBL" id="AY999063">
    <property type="protein sequence ID" value="AAY14575.1"/>
    <property type="molecule type" value="mRNA"/>
</dbReference>
<dbReference type="RefSeq" id="NP_001019813.1">
    <property type="nucleotide sequence ID" value="NM_001024642.1"/>
</dbReference>
<dbReference type="STRING" id="9615.ENSCAFP00000010433"/>
<dbReference type="PaxDb" id="9612-ENSCAFP00000037652"/>
<dbReference type="GeneID" id="554216"/>
<dbReference type="KEGG" id="cfa:554216"/>
<dbReference type="CTD" id="388533"/>
<dbReference type="eggNOG" id="ENOG502STEA">
    <property type="taxonomic scope" value="Eukaryota"/>
</dbReference>
<dbReference type="InParanoid" id="Q52MQ7"/>
<dbReference type="OrthoDB" id="9627508at2759"/>
<dbReference type="Proteomes" id="UP000002254">
    <property type="component" value="Unplaced"/>
</dbReference>
<dbReference type="Proteomes" id="UP000694429">
    <property type="component" value="Unplaced"/>
</dbReference>
<dbReference type="Proteomes" id="UP000694542">
    <property type="component" value="Unplaced"/>
</dbReference>
<dbReference type="Proteomes" id="UP000805418">
    <property type="component" value="Unplaced"/>
</dbReference>
<dbReference type="GO" id="GO:0005615">
    <property type="term" value="C:extracellular space"/>
    <property type="evidence" value="ECO:0000318"/>
    <property type="project" value="GO_Central"/>
</dbReference>
<dbReference type="GO" id="GO:0030154">
    <property type="term" value="P:cell differentiation"/>
    <property type="evidence" value="ECO:0007669"/>
    <property type="project" value="UniProtKB-KW"/>
</dbReference>
<dbReference type="GO" id="GO:0008544">
    <property type="term" value="P:epidermis development"/>
    <property type="evidence" value="ECO:0000318"/>
    <property type="project" value="GO_Central"/>
</dbReference>
<dbReference type="InterPro" id="IPR028196">
    <property type="entry name" value="KRTDAP"/>
</dbReference>
<dbReference type="PANTHER" id="PTHR36463">
    <property type="entry name" value="KERATINOCYTE DIFFERENTIATION-ASSOCIATED PROTEIN"/>
    <property type="match status" value="1"/>
</dbReference>
<dbReference type="PANTHER" id="PTHR36463:SF1">
    <property type="entry name" value="KERATINOCYTE DIFFERENTIATION-ASSOCIATED PROTEIN"/>
    <property type="match status" value="1"/>
</dbReference>
<dbReference type="Pfam" id="PF15200">
    <property type="entry name" value="KRTDAP"/>
    <property type="match status" value="1"/>
</dbReference>
<comment type="function">
    <text evidence="1 2">May act as a soluble regulator of keratinocyte differentiation. May play an important role in embryonic skin morphogenesis (By similarity).</text>
</comment>
<comment type="subcellular location">
    <subcellularLocation>
        <location evidence="1">Secreted</location>
    </subcellularLocation>
</comment>
<comment type="tissue specificity">
    <text evidence="4">Highly expressed in skin, but not detectable in any other tissue examined. Expression restricted to cornified/stratified epithelia and not detected in non-cornified/stratified epithelia.</text>
</comment>
<evidence type="ECO:0000250" key="1">
    <source>
        <dbReference type="UniProtKB" id="P60985"/>
    </source>
</evidence>
<evidence type="ECO:0000250" key="2">
    <source>
        <dbReference type="UniProtKB" id="P85411"/>
    </source>
</evidence>
<evidence type="ECO:0000255" key="3"/>
<evidence type="ECO:0000269" key="4">
    <source>
    </source>
</evidence>
<evidence type="ECO:0000303" key="5">
    <source>
    </source>
</evidence>
<evidence type="ECO:0000305" key="6"/>
<evidence type="ECO:0000312" key="7">
    <source>
        <dbReference type="EMBL" id="AAY14575.1"/>
    </source>
</evidence>
<protein>
    <recommendedName>
        <fullName>Keratinocyte differentiation-associated protein</fullName>
    </recommendedName>
</protein>